<reference key="1">
    <citation type="journal article" date="2005" name="Jpn. Agric. Res. Q.">
        <title>Genome sequence of Xanthomonas oryzae pv. oryzae suggests contribution of large numbers of effector genes and insertion sequences to its race diversity.</title>
        <authorList>
            <person name="Ochiai H."/>
            <person name="Inoue Y."/>
            <person name="Takeya M."/>
            <person name="Sasaki A."/>
            <person name="Kaku H."/>
        </authorList>
    </citation>
    <scope>NUCLEOTIDE SEQUENCE [LARGE SCALE GENOMIC DNA]</scope>
    <source>
        <strain>MAFF 311018</strain>
    </source>
</reference>
<proteinExistence type="inferred from homology"/>
<keyword id="KW-0963">Cytoplasm</keyword>
<keyword id="KW-0312">Gluconeogenesis</keyword>
<keyword id="KW-0324">Glycolysis</keyword>
<keyword id="KW-0413">Isomerase</keyword>
<evidence type="ECO:0000255" key="1">
    <source>
        <dbReference type="HAMAP-Rule" id="MF_00147"/>
    </source>
</evidence>
<feature type="chain" id="PRO_0000307598" description="Triosephosphate isomerase">
    <location>
        <begin position="1"/>
        <end position="251"/>
    </location>
</feature>
<feature type="active site" description="Electrophile" evidence="1">
    <location>
        <position position="94"/>
    </location>
</feature>
<feature type="active site" description="Proton acceptor" evidence="1">
    <location>
        <position position="166"/>
    </location>
</feature>
<feature type="binding site" evidence="1">
    <location>
        <begin position="9"/>
        <end position="11"/>
    </location>
    <ligand>
        <name>substrate</name>
    </ligand>
</feature>
<feature type="binding site" evidence="1">
    <location>
        <position position="172"/>
    </location>
    <ligand>
        <name>substrate</name>
    </ligand>
</feature>
<feature type="binding site" evidence="1">
    <location>
        <position position="211"/>
    </location>
    <ligand>
        <name>substrate</name>
    </ligand>
</feature>
<feature type="binding site" evidence="1">
    <location>
        <begin position="232"/>
        <end position="233"/>
    </location>
    <ligand>
        <name>substrate</name>
    </ligand>
</feature>
<organism>
    <name type="scientific">Xanthomonas oryzae pv. oryzae (strain MAFF 311018)</name>
    <dbReference type="NCBI Taxonomy" id="342109"/>
    <lineage>
        <taxon>Bacteria</taxon>
        <taxon>Pseudomonadati</taxon>
        <taxon>Pseudomonadota</taxon>
        <taxon>Gammaproteobacteria</taxon>
        <taxon>Lysobacterales</taxon>
        <taxon>Lysobacteraceae</taxon>
        <taxon>Xanthomonas</taxon>
    </lineage>
</organism>
<name>TPIS_XANOM</name>
<comment type="function">
    <text evidence="1">Involved in the gluconeogenesis. Catalyzes stereospecifically the conversion of dihydroxyacetone phosphate (DHAP) to D-glyceraldehyde-3-phosphate (G3P).</text>
</comment>
<comment type="catalytic activity">
    <reaction evidence="1">
        <text>D-glyceraldehyde 3-phosphate = dihydroxyacetone phosphate</text>
        <dbReference type="Rhea" id="RHEA:18585"/>
        <dbReference type="ChEBI" id="CHEBI:57642"/>
        <dbReference type="ChEBI" id="CHEBI:59776"/>
        <dbReference type="EC" id="5.3.1.1"/>
    </reaction>
</comment>
<comment type="pathway">
    <text evidence="1">Carbohydrate biosynthesis; gluconeogenesis.</text>
</comment>
<comment type="pathway">
    <text evidence="1">Carbohydrate degradation; glycolysis; D-glyceraldehyde 3-phosphate from glycerone phosphate: step 1/1.</text>
</comment>
<comment type="subunit">
    <text evidence="1">Homodimer.</text>
</comment>
<comment type="subcellular location">
    <subcellularLocation>
        <location evidence="1">Cytoplasm</location>
    </subcellularLocation>
</comment>
<comment type="similarity">
    <text evidence="1">Belongs to the triosephosphate isomerase family.</text>
</comment>
<accession>Q2P0V3</accession>
<dbReference type="EC" id="5.3.1.1" evidence="1"/>
<dbReference type="EMBL" id="AP008229">
    <property type="protein sequence ID" value="BAE69824.1"/>
    <property type="molecule type" value="Genomic_DNA"/>
</dbReference>
<dbReference type="RefSeq" id="WP_011409061.1">
    <property type="nucleotide sequence ID" value="NC_007705.1"/>
</dbReference>
<dbReference type="SMR" id="Q2P0V3"/>
<dbReference type="KEGG" id="xom:XOO3069"/>
<dbReference type="HOGENOM" id="CLU_024251_2_3_6"/>
<dbReference type="UniPathway" id="UPA00109">
    <property type="reaction ID" value="UER00189"/>
</dbReference>
<dbReference type="UniPathway" id="UPA00138"/>
<dbReference type="GO" id="GO:0005829">
    <property type="term" value="C:cytosol"/>
    <property type="evidence" value="ECO:0007669"/>
    <property type="project" value="TreeGrafter"/>
</dbReference>
<dbReference type="GO" id="GO:0004807">
    <property type="term" value="F:triose-phosphate isomerase activity"/>
    <property type="evidence" value="ECO:0007669"/>
    <property type="project" value="UniProtKB-UniRule"/>
</dbReference>
<dbReference type="GO" id="GO:0006094">
    <property type="term" value="P:gluconeogenesis"/>
    <property type="evidence" value="ECO:0007669"/>
    <property type="project" value="UniProtKB-UniRule"/>
</dbReference>
<dbReference type="GO" id="GO:0046166">
    <property type="term" value="P:glyceraldehyde-3-phosphate biosynthetic process"/>
    <property type="evidence" value="ECO:0007669"/>
    <property type="project" value="TreeGrafter"/>
</dbReference>
<dbReference type="GO" id="GO:0019563">
    <property type="term" value="P:glycerol catabolic process"/>
    <property type="evidence" value="ECO:0007669"/>
    <property type="project" value="TreeGrafter"/>
</dbReference>
<dbReference type="GO" id="GO:0006096">
    <property type="term" value="P:glycolytic process"/>
    <property type="evidence" value="ECO:0007669"/>
    <property type="project" value="UniProtKB-UniRule"/>
</dbReference>
<dbReference type="CDD" id="cd00311">
    <property type="entry name" value="TIM"/>
    <property type="match status" value="1"/>
</dbReference>
<dbReference type="FunFam" id="3.20.20.70:FF:000020">
    <property type="entry name" value="Triosephosphate isomerase"/>
    <property type="match status" value="1"/>
</dbReference>
<dbReference type="Gene3D" id="3.20.20.70">
    <property type="entry name" value="Aldolase class I"/>
    <property type="match status" value="1"/>
</dbReference>
<dbReference type="HAMAP" id="MF_00147_B">
    <property type="entry name" value="TIM_B"/>
    <property type="match status" value="1"/>
</dbReference>
<dbReference type="InterPro" id="IPR013785">
    <property type="entry name" value="Aldolase_TIM"/>
</dbReference>
<dbReference type="InterPro" id="IPR035990">
    <property type="entry name" value="TIM_sf"/>
</dbReference>
<dbReference type="InterPro" id="IPR022896">
    <property type="entry name" value="TrioseP_Isoase_bac/euk"/>
</dbReference>
<dbReference type="InterPro" id="IPR000652">
    <property type="entry name" value="Triosephosphate_isomerase"/>
</dbReference>
<dbReference type="InterPro" id="IPR020861">
    <property type="entry name" value="Triosephosphate_isomerase_AS"/>
</dbReference>
<dbReference type="NCBIfam" id="TIGR00419">
    <property type="entry name" value="tim"/>
    <property type="match status" value="1"/>
</dbReference>
<dbReference type="PANTHER" id="PTHR21139">
    <property type="entry name" value="TRIOSEPHOSPHATE ISOMERASE"/>
    <property type="match status" value="1"/>
</dbReference>
<dbReference type="PANTHER" id="PTHR21139:SF42">
    <property type="entry name" value="TRIOSEPHOSPHATE ISOMERASE"/>
    <property type="match status" value="1"/>
</dbReference>
<dbReference type="Pfam" id="PF00121">
    <property type="entry name" value="TIM"/>
    <property type="match status" value="1"/>
</dbReference>
<dbReference type="SUPFAM" id="SSF51351">
    <property type="entry name" value="Triosephosphate isomerase (TIM)"/>
    <property type="match status" value="1"/>
</dbReference>
<dbReference type="PROSITE" id="PS00171">
    <property type="entry name" value="TIM_1"/>
    <property type="match status" value="1"/>
</dbReference>
<dbReference type="PROSITE" id="PS51440">
    <property type="entry name" value="TIM_2"/>
    <property type="match status" value="1"/>
</dbReference>
<sequence length="251" mass="26151">MRRKIVAGNWKLHGSRAFATELVAKLAAHMPLEGIDVVILPPLPYLGDLIEDFEAHHLSFGAQDVSSNEKGAYTGEVSASMLVDVGAGYGLVGHSERRQYHQESSELVARKFAAAIHAGLTPVLCVGESLEQREAGQTEAILRAQLEPVLALVGSAGFAGAVLAYEPIWAIGTGCTATPEQAQAVHAFLRGEVAKADARIADSLPILYGGSVKPDNAGELFAQPDVDGGLVGGASLVAEDFLAIARAAAAC</sequence>
<gene>
    <name evidence="1" type="primary">tpiA</name>
    <name type="ordered locus">XOO3069</name>
</gene>
<protein>
    <recommendedName>
        <fullName evidence="1">Triosephosphate isomerase</fullName>
        <shortName evidence="1">TIM</shortName>
        <shortName evidence="1">TPI</shortName>
        <ecNumber evidence="1">5.3.1.1</ecNumber>
    </recommendedName>
    <alternativeName>
        <fullName evidence="1">Triose-phosphate isomerase</fullName>
    </alternativeName>
</protein>